<feature type="chain" id="PRO_0000360801" description="Toxin YwqJ">
    <location>
        <begin position="1"/>
        <end position="602"/>
    </location>
</feature>
<feature type="domain" description="LXG" evidence="2">
    <location>
        <begin position="1"/>
        <end position="235"/>
    </location>
</feature>
<feature type="coiled-coil region" evidence="1">
    <location>
        <begin position="6"/>
        <end position="41"/>
    </location>
</feature>
<feature type="coiled-coil region" evidence="1">
    <location>
        <begin position="227"/>
        <end position="251"/>
    </location>
</feature>
<evidence type="ECO:0000255" key="1"/>
<evidence type="ECO:0000255" key="2">
    <source>
        <dbReference type="PROSITE-ProRule" id="PRU01092"/>
    </source>
</evidence>
<evidence type="ECO:0000269" key="3">
    <source>
    </source>
</evidence>
<evidence type="ECO:0000303" key="4">
    <source>
    </source>
</evidence>
<evidence type="ECO:0000303" key="5">
    <source>
    </source>
</evidence>
<evidence type="ECO:0000305" key="6">
    <source>
    </source>
</evidence>
<evidence type="ECO:0000305" key="7">
    <source>
    </source>
</evidence>
<accession>P96722</accession>
<accession>Q795B6</accession>
<sequence>MSKVFESKSLIEEAKSRKKQYETLEEQLNTLKKAFQGVADLGDNFKGNGADNIKDFFQGQAEIVDSWLTLVSAQIAFLNGISGDIKDQELNDSYVETSFLDHELPNGDLKASEIVSAHKEEIDSILSGISDIIDLDMYTLDDYADKMGDAQKIRRDTITAVDKLDESLTTEYQNLESLDNAVLTKYSVLMQATSNGKSASPMYYDKKAFHSNEVYKSVIEVENQGTTYIDAKTQQAEARRLQEKAEEEANKPWYEKTWDGVCNFTGEVTGYYDYKRATEGVDPVTGEKLSTAERVTAGAMAAAGFIPVVGWAGRAFKGGKAIYKTGKAAIAAEHALDAYKTGKSLDILKMTEMGAYGLVASNGFSEAVTGRDMFGNKVSEEKRKQGALEAITIIGGAGLAHYFDRLYQKNAPYVNKVSNESLISNIAKTTEEKQTRLQYLRNKHGVLSKEDLHHRINLRAEVLNELSRIKSSGLTKKQRGPAVAGVLDKKTGNYYFGINNIDGKPPKVLHPLIHDRIVNMPTELKEGYIKTSGAGSHAEVNALNEALLQRPDADLKDLMVYVVSARKINKKMPEGVPMPRCPHCEYITQNTNYIPEALKYGK</sequence>
<organism>
    <name type="scientific">Bacillus subtilis (strain 168)</name>
    <dbReference type="NCBI Taxonomy" id="224308"/>
    <lineage>
        <taxon>Bacteria</taxon>
        <taxon>Bacillati</taxon>
        <taxon>Bacillota</taxon>
        <taxon>Bacilli</taxon>
        <taxon>Bacillales</taxon>
        <taxon>Bacillaceae</taxon>
        <taxon>Bacillus</taxon>
    </lineage>
</organism>
<name>YWQJ_BACSU</name>
<reference key="1">
    <citation type="journal article" date="1997" name="Microbiology">
        <title>The Bacillus subtilis genome from gerBC (311 degrees) to licR (334 degrees).</title>
        <authorList>
            <person name="Presecan E."/>
            <person name="Moszer I."/>
            <person name="Boursier L."/>
            <person name="Cruz Ramos H."/>
            <person name="De La Fuente V."/>
            <person name="Hullo M.-F."/>
            <person name="Lelong C."/>
            <person name="Schleich S."/>
            <person name="Sekowska A."/>
            <person name="Song B.H."/>
            <person name="Villani G."/>
            <person name="Kunst F."/>
            <person name="Danchin A."/>
            <person name="Glaser P."/>
        </authorList>
    </citation>
    <scope>NUCLEOTIDE SEQUENCE [GENOMIC DNA]</scope>
    <source>
        <strain>168</strain>
    </source>
</reference>
<reference key="2">
    <citation type="journal article" date="1997" name="Nature">
        <title>The complete genome sequence of the Gram-positive bacterium Bacillus subtilis.</title>
        <authorList>
            <person name="Kunst F."/>
            <person name="Ogasawara N."/>
            <person name="Moszer I."/>
            <person name="Albertini A.M."/>
            <person name="Alloni G."/>
            <person name="Azevedo V."/>
            <person name="Bertero M.G."/>
            <person name="Bessieres P."/>
            <person name="Bolotin A."/>
            <person name="Borchert S."/>
            <person name="Borriss R."/>
            <person name="Boursier L."/>
            <person name="Brans A."/>
            <person name="Braun M."/>
            <person name="Brignell S.C."/>
            <person name="Bron S."/>
            <person name="Brouillet S."/>
            <person name="Bruschi C.V."/>
            <person name="Caldwell B."/>
            <person name="Capuano V."/>
            <person name="Carter N.M."/>
            <person name="Choi S.-K."/>
            <person name="Codani J.-J."/>
            <person name="Connerton I.F."/>
            <person name="Cummings N.J."/>
            <person name="Daniel R.A."/>
            <person name="Denizot F."/>
            <person name="Devine K.M."/>
            <person name="Duesterhoeft A."/>
            <person name="Ehrlich S.D."/>
            <person name="Emmerson P.T."/>
            <person name="Entian K.-D."/>
            <person name="Errington J."/>
            <person name="Fabret C."/>
            <person name="Ferrari E."/>
            <person name="Foulger D."/>
            <person name="Fritz C."/>
            <person name="Fujita M."/>
            <person name="Fujita Y."/>
            <person name="Fuma S."/>
            <person name="Galizzi A."/>
            <person name="Galleron N."/>
            <person name="Ghim S.-Y."/>
            <person name="Glaser P."/>
            <person name="Goffeau A."/>
            <person name="Golightly E.J."/>
            <person name="Grandi G."/>
            <person name="Guiseppi G."/>
            <person name="Guy B.J."/>
            <person name="Haga K."/>
            <person name="Haiech J."/>
            <person name="Harwood C.R."/>
            <person name="Henaut A."/>
            <person name="Hilbert H."/>
            <person name="Holsappel S."/>
            <person name="Hosono S."/>
            <person name="Hullo M.-F."/>
            <person name="Itaya M."/>
            <person name="Jones L.-M."/>
            <person name="Joris B."/>
            <person name="Karamata D."/>
            <person name="Kasahara Y."/>
            <person name="Klaerr-Blanchard M."/>
            <person name="Klein C."/>
            <person name="Kobayashi Y."/>
            <person name="Koetter P."/>
            <person name="Koningstein G."/>
            <person name="Krogh S."/>
            <person name="Kumano M."/>
            <person name="Kurita K."/>
            <person name="Lapidus A."/>
            <person name="Lardinois S."/>
            <person name="Lauber J."/>
            <person name="Lazarevic V."/>
            <person name="Lee S.-M."/>
            <person name="Levine A."/>
            <person name="Liu H."/>
            <person name="Masuda S."/>
            <person name="Mauel C."/>
            <person name="Medigue C."/>
            <person name="Medina N."/>
            <person name="Mellado R.P."/>
            <person name="Mizuno M."/>
            <person name="Moestl D."/>
            <person name="Nakai S."/>
            <person name="Noback M."/>
            <person name="Noone D."/>
            <person name="O'Reilly M."/>
            <person name="Ogawa K."/>
            <person name="Ogiwara A."/>
            <person name="Oudega B."/>
            <person name="Park S.-H."/>
            <person name="Parro V."/>
            <person name="Pohl T.M."/>
            <person name="Portetelle D."/>
            <person name="Porwollik S."/>
            <person name="Prescott A.M."/>
            <person name="Presecan E."/>
            <person name="Pujic P."/>
            <person name="Purnelle B."/>
            <person name="Rapoport G."/>
            <person name="Rey M."/>
            <person name="Reynolds S."/>
            <person name="Rieger M."/>
            <person name="Rivolta C."/>
            <person name="Rocha E."/>
            <person name="Roche B."/>
            <person name="Rose M."/>
            <person name="Sadaie Y."/>
            <person name="Sato T."/>
            <person name="Scanlan E."/>
            <person name="Schleich S."/>
            <person name="Schroeter R."/>
            <person name="Scoffone F."/>
            <person name="Sekiguchi J."/>
            <person name="Sekowska A."/>
            <person name="Seror S.J."/>
            <person name="Serror P."/>
            <person name="Shin B.-S."/>
            <person name="Soldo B."/>
            <person name="Sorokin A."/>
            <person name="Tacconi E."/>
            <person name="Takagi T."/>
            <person name="Takahashi H."/>
            <person name="Takemaru K."/>
            <person name="Takeuchi M."/>
            <person name="Tamakoshi A."/>
            <person name="Tanaka T."/>
            <person name="Terpstra P."/>
            <person name="Tognoni A."/>
            <person name="Tosato V."/>
            <person name="Uchiyama S."/>
            <person name="Vandenbol M."/>
            <person name="Vannier F."/>
            <person name="Vassarotti A."/>
            <person name="Viari A."/>
            <person name="Wambutt R."/>
            <person name="Wedler E."/>
            <person name="Wedler H."/>
            <person name="Weitzenegger T."/>
            <person name="Winters P."/>
            <person name="Wipat A."/>
            <person name="Yamamoto H."/>
            <person name="Yamane K."/>
            <person name="Yasumoto K."/>
            <person name="Yata K."/>
            <person name="Yoshida K."/>
            <person name="Yoshikawa H.-F."/>
            <person name="Zumstein E."/>
            <person name="Yoshikawa H."/>
            <person name="Danchin A."/>
        </authorList>
    </citation>
    <scope>NUCLEOTIDE SEQUENCE [LARGE SCALE GENOMIC DNA]</scope>
    <source>
        <strain>168</strain>
    </source>
</reference>
<reference key="3">
    <citation type="journal article" date="2012" name="FEBS Lett.">
        <title>A novel family of toxin/antitoxin proteins in Bacillus species.</title>
        <authorList>
            <person name="Holberger L.E."/>
            <person name="Garza-Sanchez F."/>
            <person name="Lamoureux J."/>
            <person name="Low D.A."/>
            <person name="Hayes C.S."/>
        </authorList>
    </citation>
    <scope>IDENTIFICATION OF TOXIN-IMMUNITY PAIR</scope>
    <scope>PROBABLE SUBUNIT</scope>
    <source>
        <strain>168</strain>
    </source>
</reference>
<reference key="4">
    <citation type="journal article" date="2021" name="PLoS Genet.">
        <title>Diverse LXG toxin and antitoxin systems specifically mediate intraspecies competition in Bacillus subtilis biofilms.</title>
        <authorList>
            <person name="Kobayashi K."/>
        </authorList>
    </citation>
    <scope>FUNCTION AS A TOXIN</scope>
    <scope>SUBCELLULAR LOCATION</scope>
    <scope>INDUCTION</scope>
    <scope>DISRUPTION PHENOTYPE</scope>
    <source>
        <strain>168 / Marburg / ATCC 6051 / DSM 10 / JCM 1465 / NBRC 13719 / NCIMB 3610 / NRRL NRS-744 / VKM B-501</strain>
    </source>
</reference>
<keyword id="KW-0175">Coiled coil</keyword>
<keyword id="KW-1185">Reference proteome</keyword>
<keyword id="KW-0964">Secreted</keyword>
<protein>
    <recommendedName>
        <fullName evidence="5">Toxin YwqJ</fullName>
    </recommendedName>
</protein>
<proteinExistence type="evidence at protein level"/>
<comment type="function">
    <text evidence="3 6 7">Toxic component of one of 6 LXG toxin-immunity modules in this strain. They promote kin selection, mediate competition in biofilms, and drive spatial segregation of different strains, indicating that LXG toxins may help avoid warfare between strains in biofilms. Mediates intercellular competition during biofilm formation; disruption of the operon disadvantages the bacteria, but overexpression of the cognate immunity protein restores growth in competition with wild-type. Overexpression alone in situ causes growth arrest but not cell lysis; no effect is seen on DNA or rRNA. Co-overexpression with cognate immunity protein YwqK does not cause growth arrest. The toxic effect is dependent on the epsA and tapA operons which are required for biofilm formation (PubMed:34280190). Its toxic effects are probably neutralized by its cognate immunity protein YwqK, but not by immunity proteins specific to other toxins with the LXG domain (Probable). May have deaminase activity (Probable).</text>
</comment>
<comment type="subunit">
    <text evidence="6">Probably interacts with cognate immunity protein YwqK but not with non-cognate immunity proteins. The interaction inhibits the toxic activity of YwqJ.</text>
</comment>
<comment type="interaction">
    <interactant intactId="EBI-5243080">
        <id>P96722</id>
    </interactant>
    <interactant intactId="EBI-5242442">
        <id>O31501</id>
        <label>swrC</label>
    </interactant>
    <organismsDiffer>false</organismsDiffer>
    <experiments>3</experiments>
</comment>
<comment type="subcellular location">
    <subcellularLocation>
        <location evidence="7">Secreted</location>
    </subcellularLocation>
    <text evidence="3">Delivery to target cells requires the type VII secretion system (T7SS) and YukE.</text>
</comment>
<comment type="induction">
    <text evidence="3">Expressed on rich and minimal solid media likely in early stationary phase; dependent on DegSU. Not expressed in liquid LB, but only under conditions that promote biofilm formation.</text>
</comment>
<comment type="disruption phenotype">
    <text evidence="3">Deletion of the ywqH-ywqI-ywqJ-ywqK-nfi operon has no visible growth phenotype, however it is out-competed by wild-type cells.</text>
</comment>
<comment type="similarity">
    <text evidence="4">In the N-terminal section; belongs to the LXG family.</text>
</comment>
<dbReference type="EMBL" id="Z92952">
    <property type="protein sequence ID" value="CAB07448.1"/>
    <property type="molecule type" value="Genomic_DNA"/>
</dbReference>
<dbReference type="EMBL" id="AL009126">
    <property type="protein sequence ID" value="CAB15636.1"/>
    <property type="molecule type" value="Genomic_DNA"/>
</dbReference>
<dbReference type="PIR" id="E70067">
    <property type="entry name" value="E70067"/>
</dbReference>
<dbReference type="RefSeq" id="WP_003243987.1">
    <property type="nucleotide sequence ID" value="NZ_OZ025638.1"/>
</dbReference>
<dbReference type="FunCoup" id="P96722">
    <property type="interactions" value="6"/>
</dbReference>
<dbReference type="IntAct" id="P96722">
    <property type="interactions" value="27"/>
</dbReference>
<dbReference type="STRING" id="224308.BSU36190"/>
<dbReference type="PaxDb" id="224308-BSU36190"/>
<dbReference type="EnsemblBacteria" id="CAB15636">
    <property type="protein sequence ID" value="CAB15636"/>
    <property type="gene ID" value="BSU_36190"/>
</dbReference>
<dbReference type="GeneID" id="936885"/>
<dbReference type="KEGG" id="bsu:BSU36190"/>
<dbReference type="PATRIC" id="fig|224308.179.peg.3916"/>
<dbReference type="eggNOG" id="COG5444">
    <property type="taxonomic scope" value="Bacteria"/>
</dbReference>
<dbReference type="InParanoid" id="P96722"/>
<dbReference type="OrthoDB" id="6636741at2"/>
<dbReference type="BioCyc" id="BSUB:BSU36190-MONOMER"/>
<dbReference type="Proteomes" id="UP000001570">
    <property type="component" value="Chromosome"/>
</dbReference>
<dbReference type="GO" id="GO:0005576">
    <property type="term" value="C:extracellular region"/>
    <property type="evidence" value="ECO:0007669"/>
    <property type="project" value="UniProtKB-SubCell"/>
</dbReference>
<dbReference type="InterPro" id="IPR051768">
    <property type="entry name" value="Bact_secretion_toxin"/>
</dbReference>
<dbReference type="InterPro" id="IPR006829">
    <property type="entry name" value="LXG_dom"/>
</dbReference>
<dbReference type="InterPro" id="IPR027797">
    <property type="entry name" value="PT-TG_dom"/>
</dbReference>
<dbReference type="InterPro" id="IPR025968">
    <property type="entry name" value="YwqJ_deaminase"/>
</dbReference>
<dbReference type="PANTHER" id="PTHR34976">
    <property type="entry name" value="RIBONUCLEASE YQCG-RELATED"/>
    <property type="match status" value="1"/>
</dbReference>
<dbReference type="PANTHER" id="PTHR34976:SF2">
    <property type="entry name" value="TYPE VII SECRETION SYSTEM PROTEIN ESSD"/>
    <property type="match status" value="1"/>
</dbReference>
<dbReference type="Pfam" id="PF04740">
    <property type="entry name" value="LXG"/>
    <property type="match status" value="1"/>
</dbReference>
<dbReference type="Pfam" id="PF14449">
    <property type="entry name" value="PT-TG"/>
    <property type="match status" value="1"/>
</dbReference>
<dbReference type="Pfam" id="PF14431">
    <property type="entry name" value="YwqJ-deaminase"/>
    <property type="match status" value="1"/>
</dbReference>
<dbReference type="PROSITE" id="PS51756">
    <property type="entry name" value="LXG"/>
    <property type="match status" value="1"/>
</dbReference>
<gene>
    <name type="primary">ywqJ</name>
    <name type="ordered locus">BSU36190</name>
</gene>